<proteinExistence type="inferred from homology"/>
<dbReference type="EMBL" id="BA000003">
    <property type="protein sequence ID" value="BAB12972.1"/>
    <property type="molecule type" value="Genomic_DNA"/>
</dbReference>
<dbReference type="RefSeq" id="NP_240086.1">
    <property type="nucleotide sequence ID" value="NC_002528.1"/>
</dbReference>
<dbReference type="RefSeq" id="WP_009874216.1">
    <property type="nucleotide sequence ID" value="NZ_AP036055.1"/>
</dbReference>
<dbReference type="SMR" id="P57350"/>
<dbReference type="STRING" id="563178.BUAP5A_257"/>
<dbReference type="EnsemblBacteria" id="BAB12972">
    <property type="protein sequence ID" value="BAB12972"/>
    <property type="gene ID" value="BAB12972"/>
</dbReference>
<dbReference type="KEGG" id="buc:BU262"/>
<dbReference type="PATRIC" id="fig|107806.10.peg.272"/>
<dbReference type="eggNOG" id="COG2915">
    <property type="taxonomic scope" value="Bacteria"/>
</dbReference>
<dbReference type="HOGENOM" id="CLU_098920_0_0_6"/>
<dbReference type="Proteomes" id="UP000001806">
    <property type="component" value="Chromosome"/>
</dbReference>
<dbReference type="GO" id="GO:0005737">
    <property type="term" value="C:cytoplasm"/>
    <property type="evidence" value="ECO:0007669"/>
    <property type="project" value="UniProtKB-SubCell"/>
</dbReference>
<dbReference type="GO" id="GO:0005886">
    <property type="term" value="C:plasma membrane"/>
    <property type="evidence" value="ECO:0007669"/>
    <property type="project" value="UniProtKB-SubCell"/>
</dbReference>
<dbReference type="Gene3D" id="1.10.3890.10">
    <property type="entry name" value="HflD-like"/>
    <property type="match status" value="1"/>
</dbReference>
<dbReference type="HAMAP" id="MF_00695">
    <property type="entry name" value="HflD_protein"/>
    <property type="match status" value="1"/>
</dbReference>
<dbReference type="InterPro" id="IPR007451">
    <property type="entry name" value="HflD"/>
</dbReference>
<dbReference type="InterPro" id="IPR035932">
    <property type="entry name" value="HflD-like_sf"/>
</dbReference>
<dbReference type="NCBIfam" id="NF001246">
    <property type="entry name" value="PRK00218.1-2"/>
    <property type="match status" value="1"/>
</dbReference>
<dbReference type="NCBIfam" id="NF001248">
    <property type="entry name" value="PRK00218.1-4"/>
    <property type="match status" value="1"/>
</dbReference>
<dbReference type="PANTHER" id="PTHR38100">
    <property type="entry name" value="HIGH FREQUENCY LYSOGENIZATION PROTEIN HFLD"/>
    <property type="match status" value="1"/>
</dbReference>
<dbReference type="PANTHER" id="PTHR38100:SF1">
    <property type="entry name" value="HIGH FREQUENCY LYSOGENIZATION PROTEIN HFLD"/>
    <property type="match status" value="1"/>
</dbReference>
<dbReference type="Pfam" id="PF04356">
    <property type="entry name" value="DUF489"/>
    <property type="match status" value="1"/>
</dbReference>
<dbReference type="SUPFAM" id="SSF101322">
    <property type="entry name" value="YcfC-like"/>
    <property type="match status" value="1"/>
</dbReference>
<sequence>MKKIHLITLSLAGICQSAHLVQQLAYSGKCDSNAFSICLKSILEINPTSFIAIYGNHEKNLIIGLEILLSTLTFSSFSYSYIELIKYISNMMIIEKKLKKSRTAIYSLKNKISVISSEYYLNYNIKNLTRKLGELYLEIISSLGSRIVIKGIKDFLQDHQIQEKIRCLLFSGIRAIVLWKQYGGNQLQLIYFRYFIIKKAKKILYHLKDAT</sequence>
<keyword id="KW-1003">Cell membrane</keyword>
<keyword id="KW-0963">Cytoplasm</keyword>
<keyword id="KW-0472">Membrane</keyword>
<keyword id="KW-1185">Reference proteome</keyword>
<accession>P57350</accession>
<reference key="1">
    <citation type="journal article" date="2000" name="Nature">
        <title>Genome sequence of the endocellular bacterial symbiont of aphids Buchnera sp. APS.</title>
        <authorList>
            <person name="Shigenobu S."/>
            <person name="Watanabe H."/>
            <person name="Hattori M."/>
            <person name="Sakaki Y."/>
            <person name="Ishikawa H."/>
        </authorList>
    </citation>
    <scope>NUCLEOTIDE SEQUENCE [LARGE SCALE GENOMIC DNA]</scope>
    <source>
        <strain>APS</strain>
    </source>
</reference>
<comment type="subcellular location">
    <subcellularLocation>
        <location>Cytoplasm</location>
    </subcellularLocation>
    <subcellularLocation>
        <location evidence="1">Cell membrane</location>
        <topology evidence="1">Peripheral membrane protein</topology>
        <orientation evidence="1">Cytoplasmic side</orientation>
    </subcellularLocation>
</comment>
<comment type="similarity">
    <text evidence="1">Belongs to the HflD family.</text>
</comment>
<evidence type="ECO:0000255" key="1">
    <source>
        <dbReference type="HAMAP-Rule" id="MF_00695"/>
    </source>
</evidence>
<feature type="chain" id="PRO_0000071574" description="High frequency lysogenization protein HflD homolog">
    <location>
        <begin position="1"/>
        <end position="211"/>
    </location>
</feature>
<organism>
    <name type="scientific">Buchnera aphidicola subsp. Acyrthosiphon pisum (strain APS)</name>
    <name type="common">Acyrthosiphon pisum symbiotic bacterium</name>
    <dbReference type="NCBI Taxonomy" id="107806"/>
    <lineage>
        <taxon>Bacteria</taxon>
        <taxon>Pseudomonadati</taxon>
        <taxon>Pseudomonadota</taxon>
        <taxon>Gammaproteobacteria</taxon>
        <taxon>Enterobacterales</taxon>
        <taxon>Erwiniaceae</taxon>
        <taxon>Buchnera</taxon>
    </lineage>
</organism>
<name>HFLD_BUCAI</name>
<gene>
    <name evidence="1" type="primary">hflD</name>
    <name type="ordered locus">BU262</name>
</gene>
<protein>
    <recommendedName>
        <fullName evidence="1">High frequency lysogenization protein HflD homolog</fullName>
    </recommendedName>
</protein>